<accession>C1AW66</accession>
<reference key="1">
    <citation type="submission" date="2009-03" db="EMBL/GenBank/DDBJ databases">
        <title>Comparison of the complete genome sequences of Rhodococcus erythropolis PR4 and Rhodococcus opacus B4.</title>
        <authorList>
            <person name="Takarada H."/>
            <person name="Sekine M."/>
            <person name="Hosoyama A."/>
            <person name="Yamada R."/>
            <person name="Fujisawa T."/>
            <person name="Omata S."/>
            <person name="Shimizu A."/>
            <person name="Tsukatani N."/>
            <person name="Tanikawa S."/>
            <person name="Fujita N."/>
            <person name="Harayama S."/>
        </authorList>
    </citation>
    <scope>NUCLEOTIDE SEQUENCE [LARGE SCALE GENOMIC DNA]</scope>
    <source>
        <strain>B4</strain>
    </source>
</reference>
<sequence>MEIVIRQTPSEVGTTVADIVEGYVRRGPTTLGLATGSSPLGSYRELARRHRESGLDFSDARAFLLDEYVGLPKSHGQSYFSVIRSEFVDHVNLDPGHVLSPDGESSDIAEEGARYDAAIAEAGGIDVQLLGIGTDGHIGFNEPGSALTSRTRVKTLTEQTRLDNARFFDSVDDVPHHVLTQGLGTISEARHLVMIAFGKGKAEAIAAAAEGPLSAFCPASVMQLHRHVTVVIDEAAASKLQLADYYRYALEHKPSWQSF</sequence>
<organism>
    <name type="scientific">Rhodococcus opacus (strain B4)</name>
    <dbReference type="NCBI Taxonomy" id="632772"/>
    <lineage>
        <taxon>Bacteria</taxon>
        <taxon>Bacillati</taxon>
        <taxon>Actinomycetota</taxon>
        <taxon>Actinomycetes</taxon>
        <taxon>Mycobacteriales</taxon>
        <taxon>Nocardiaceae</taxon>
        <taxon>Rhodococcus</taxon>
    </lineage>
</organism>
<feature type="chain" id="PRO_1000165023" description="Glucosamine-6-phosphate deaminase">
    <location>
        <begin position="1"/>
        <end position="259"/>
    </location>
</feature>
<feature type="active site" description="Proton acceptor; for enolization step" evidence="1">
    <location>
        <position position="66"/>
    </location>
</feature>
<feature type="active site" description="For ring-opening step" evidence="1">
    <location>
        <position position="135"/>
    </location>
</feature>
<feature type="active site" description="Proton acceptor; for ring-opening step" evidence="1">
    <location>
        <position position="137"/>
    </location>
</feature>
<feature type="active site" description="For ring-opening step" evidence="1">
    <location>
        <position position="142"/>
    </location>
</feature>
<protein>
    <recommendedName>
        <fullName evidence="1">Glucosamine-6-phosphate deaminase</fullName>
        <ecNumber evidence="1">3.5.99.6</ecNumber>
    </recommendedName>
    <alternativeName>
        <fullName evidence="1">GlcN6P deaminase</fullName>
        <shortName evidence="1">GNPDA</shortName>
    </alternativeName>
    <alternativeName>
        <fullName evidence="1">Glucosamine-6-phosphate isomerase</fullName>
    </alternativeName>
</protein>
<evidence type="ECO:0000255" key="1">
    <source>
        <dbReference type="HAMAP-Rule" id="MF_01241"/>
    </source>
</evidence>
<proteinExistence type="inferred from homology"/>
<name>NAGB_RHOOB</name>
<keyword id="KW-0119">Carbohydrate metabolism</keyword>
<keyword id="KW-0378">Hydrolase</keyword>
<gene>
    <name evidence="1" type="primary">nagB</name>
    <name type="ordered locus">ROP_12490</name>
</gene>
<comment type="function">
    <text evidence="1">Catalyzes the reversible isomerization-deamination of glucosamine 6-phosphate (GlcN6P) to form fructose 6-phosphate (Fru6P) and ammonium ion.</text>
</comment>
<comment type="catalytic activity">
    <reaction evidence="1">
        <text>alpha-D-glucosamine 6-phosphate + H2O = beta-D-fructose 6-phosphate + NH4(+)</text>
        <dbReference type="Rhea" id="RHEA:12172"/>
        <dbReference type="ChEBI" id="CHEBI:15377"/>
        <dbReference type="ChEBI" id="CHEBI:28938"/>
        <dbReference type="ChEBI" id="CHEBI:57634"/>
        <dbReference type="ChEBI" id="CHEBI:75989"/>
        <dbReference type="EC" id="3.5.99.6"/>
    </reaction>
</comment>
<comment type="pathway">
    <text evidence="1">Amino-sugar metabolism; N-acetylneuraminate degradation; D-fructose 6-phosphate from N-acetylneuraminate: step 5/5.</text>
</comment>
<comment type="similarity">
    <text evidence="1">Belongs to the glucosamine/galactosamine-6-phosphate isomerase family. NagB subfamily.</text>
</comment>
<dbReference type="EC" id="3.5.99.6" evidence="1"/>
<dbReference type="EMBL" id="AP011115">
    <property type="protein sequence ID" value="BAH49496.1"/>
    <property type="molecule type" value="Genomic_DNA"/>
</dbReference>
<dbReference type="RefSeq" id="WP_012688471.1">
    <property type="nucleotide sequence ID" value="NC_012522.1"/>
</dbReference>
<dbReference type="SMR" id="C1AW66"/>
<dbReference type="STRING" id="632772.ROP_12490"/>
<dbReference type="KEGG" id="rop:ROP_12490"/>
<dbReference type="PATRIC" id="fig|632772.20.peg.1320"/>
<dbReference type="HOGENOM" id="CLU_049611_1_1_11"/>
<dbReference type="OrthoDB" id="9791139at2"/>
<dbReference type="UniPathway" id="UPA00629">
    <property type="reaction ID" value="UER00684"/>
</dbReference>
<dbReference type="Proteomes" id="UP000002212">
    <property type="component" value="Chromosome"/>
</dbReference>
<dbReference type="GO" id="GO:0005737">
    <property type="term" value="C:cytoplasm"/>
    <property type="evidence" value="ECO:0007669"/>
    <property type="project" value="TreeGrafter"/>
</dbReference>
<dbReference type="GO" id="GO:0004342">
    <property type="term" value="F:glucosamine-6-phosphate deaminase activity"/>
    <property type="evidence" value="ECO:0007669"/>
    <property type="project" value="UniProtKB-UniRule"/>
</dbReference>
<dbReference type="GO" id="GO:0042802">
    <property type="term" value="F:identical protein binding"/>
    <property type="evidence" value="ECO:0007669"/>
    <property type="project" value="TreeGrafter"/>
</dbReference>
<dbReference type="GO" id="GO:0005975">
    <property type="term" value="P:carbohydrate metabolic process"/>
    <property type="evidence" value="ECO:0007669"/>
    <property type="project" value="InterPro"/>
</dbReference>
<dbReference type="GO" id="GO:0006043">
    <property type="term" value="P:glucosamine catabolic process"/>
    <property type="evidence" value="ECO:0007669"/>
    <property type="project" value="TreeGrafter"/>
</dbReference>
<dbReference type="GO" id="GO:0006046">
    <property type="term" value="P:N-acetylglucosamine catabolic process"/>
    <property type="evidence" value="ECO:0007669"/>
    <property type="project" value="TreeGrafter"/>
</dbReference>
<dbReference type="GO" id="GO:0019262">
    <property type="term" value="P:N-acetylneuraminate catabolic process"/>
    <property type="evidence" value="ECO:0007669"/>
    <property type="project" value="UniProtKB-UniRule"/>
</dbReference>
<dbReference type="CDD" id="cd01399">
    <property type="entry name" value="GlcN6P_deaminase"/>
    <property type="match status" value="1"/>
</dbReference>
<dbReference type="Gene3D" id="3.40.50.1360">
    <property type="match status" value="1"/>
</dbReference>
<dbReference type="HAMAP" id="MF_01241">
    <property type="entry name" value="GlcN6P_deamin"/>
    <property type="match status" value="1"/>
</dbReference>
<dbReference type="InterPro" id="IPR006148">
    <property type="entry name" value="Glc/Gal-6P_isomerase"/>
</dbReference>
<dbReference type="InterPro" id="IPR004547">
    <property type="entry name" value="Glucosamine6P_isomerase"/>
</dbReference>
<dbReference type="InterPro" id="IPR018321">
    <property type="entry name" value="Glucosamine6P_isomerase_CS"/>
</dbReference>
<dbReference type="InterPro" id="IPR037171">
    <property type="entry name" value="NagB/RpiA_transferase-like"/>
</dbReference>
<dbReference type="NCBIfam" id="TIGR00502">
    <property type="entry name" value="nagB"/>
    <property type="match status" value="1"/>
</dbReference>
<dbReference type="NCBIfam" id="NF001684">
    <property type="entry name" value="PRK00443.1-4"/>
    <property type="match status" value="1"/>
</dbReference>
<dbReference type="PANTHER" id="PTHR11280">
    <property type="entry name" value="GLUCOSAMINE-6-PHOSPHATE ISOMERASE"/>
    <property type="match status" value="1"/>
</dbReference>
<dbReference type="PANTHER" id="PTHR11280:SF5">
    <property type="entry name" value="GLUCOSAMINE-6-PHOSPHATE ISOMERASE"/>
    <property type="match status" value="1"/>
</dbReference>
<dbReference type="Pfam" id="PF01182">
    <property type="entry name" value="Glucosamine_iso"/>
    <property type="match status" value="1"/>
</dbReference>
<dbReference type="SUPFAM" id="SSF100950">
    <property type="entry name" value="NagB/RpiA/CoA transferase-like"/>
    <property type="match status" value="1"/>
</dbReference>
<dbReference type="PROSITE" id="PS01161">
    <property type="entry name" value="GLC_GALNAC_ISOMERASE"/>
    <property type="match status" value="1"/>
</dbReference>